<evidence type="ECO:0000255" key="1">
    <source>
        <dbReference type="HAMAP-Rule" id="MF_00038"/>
    </source>
</evidence>
<proteinExistence type="inferred from homology"/>
<keyword id="KW-0131">Cell cycle</keyword>
<keyword id="KW-0132">Cell division</keyword>
<keyword id="KW-0997">Cell inner membrane</keyword>
<keyword id="KW-1003">Cell membrane</keyword>
<keyword id="KW-0133">Cell shape</keyword>
<keyword id="KW-0961">Cell wall biogenesis/degradation</keyword>
<keyword id="KW-0460">Magnesium</keyword>
<keyword id="KW-0472">Membrane</keyword>
<keyword id="KW-0479">Metal-binding</keyword>
<keyword id="KW-0573">Peptidoglycan synthesis</keyword>
<keyword id="KW-0808">Transferase</keyword>
<keyword id="KW-0812">Transmembrane</keyword>
<keyword id="KW-1133">Transmembrane helix</keyword>
<protein>
    <recommendedName>
        <fullName evidence="1">Phospho-N-acetylmuramoyl-pentapeptide-transferase</fullName>
        <ecNumber evidence="1">2.7.8.13</ecNumber>
    </recommendedName>
    <alternativeName>
        <fullName evidence="1">UDP-MurNAc-pentapeptide phosphotransferase</fullName>
    </alternativeName>
</protein>
<feature type="chain" id="PRO_1000090661" description="Phospho-N-acetylmuramoyl-pentapeptide-transferase">
    <location>
        <begin position="1"/>
        <end position="366"/>
    </location>
</feature>
<feature type="transmembrane region" description="Helical" evidence="1">
    <location>
        <begin position="27"/>
        <end position="47"/>
    </location>
</feature>
<feature type="transmembrane region" description="Helical" evidence="1">
    <location>
        <begin position="71"/>
        <end position="91"/>
    </location>
</feature>
<feature type="transmembrane region" description="Helical" evidence="1">
    <location>
        <begin position="93"/>
        <end position="113"/>
    </location>
</feature>
<feature type="transmembrane region" description="Helical" evidence="1">
    <location>
        <begin position="134"/>
        <end position="154"/>
    </location>
</feature>
<feature type="transmembrane region" description="Helical" evidence="1">
    <location>
        <begin position="174"/>
        <end position="194"/>
    </location>
</feature>
<feature type="transmembrane region" description="Helical" evidence="1">
    <location>
        <begin position="205"/>
        <end position="225"/>
    </location>
</feature>
<feature type="transmembrane region" description="Helical" evidence="1">
    <location>
        <begin position="245"/>
        <end position="265"/>
    </location>
</feature>
<feature type="transmembrane region" description="Helical" evidence="1">
    <location>
        <begin position="268"/>
        <end position="288"/>
    </location>
</feature>
<feature type="transmembrane region" description="Helical" evidence="1">
    <location>
        <begin position="294"/>
        <end position="314"/>
    </location>
</feature>
<feature type="transmembrane region" description="Helical" evidence="1">
    <location>
        <begin position="343"/>
        <end position="363"/>
    </location>
</feature>
<organism>
    <name type="scientific">Rhizobium etli (strain CIAT 652)</name>
    <dbReference type="NCBI Taxonomy" id="491916"/>
    <lineage>
        <taxon>Bacteria</taxon>
        <taxon>Pseudomonadati</taxon>
        <taxon>Pseudomonadota</taxon>
        <taxon>Alphaproteobacteria</taxon>
        <taxon>Hyphomicrobiales</taxon>
        <taxon>Rhizobiaceae</taxon>
        <taxon>Rhizobium/Agrobacterium group</taxon>
        <taxon>Rhizobium</taxon>
    </lineage>
</organism>
<comment type="function">
    <text evidence="1">Catalyzes the initial step of the lipid cycle reactions in the biosynthesis of the cell wall peptidoglycan: transfers peptidoglycan precursor phospho-MurNAc-pentapeptide from UDP-MurNAc-pentapeptide onto the lipid carrier undecaprenyl phosphate, yielding undecaprenyl-pyrophosphoryl-MurNAc-pentapeptide, known as lipid I.</text>
</comment>
<comment type="catalytic activity">
    <reaction evidence="1">
        <text>UDP-N-acetyl-alpha-D-muramoyl-L-alanyl-gamma-D-glutamyl-meso-2,6-diaminopimeloyl-D-alanyl-D-alanine + di-trans,octa-cis-undecaprenyl phosphate = di-trans,octa-cis-undecaprenyl diphospho-N-acetyl-alpha-D-muramoyl-L-alanyl-D-glutamyl-meso-2,6-diaminopimeloyl-D-alanyl-D-alanine + UMP</text>
        <dbReference type="Rhea" id="RHEA:28386"/>
        <dbReference type="ChEBI" id="CHEBI:57865"/>
        <dbReference type="ChEBI" id="CHEBI:60392"/>
        <dbReference type="ChEBI" id="CHEBI:61386"/>
        <dbReference type="ChEBI" id="CHEBI:61387"/>
        <dbReference type="EC" id="2.7.8.13"/>
    </reaction>
</comment>
<comment type="cofactor">
    <cofactor evidence="1">
        <name>Mg(2+)</name>
        <dbReference type="ChEBI" id="CHEBI:18420"/>
    </cofactor>
</comment>
<comment type="pathway">
    <text evidence="1">Cell wall biogenesis; peptidoglycan biosynthesis.</text>
</comment>
<comment type="subcellular location">
    <subcellularLocation>
        <location evidence="1">Cell inner membrane</location>
        <topology evidence="1">Multi-pass membrane protein</topology>
    </subcellularLocation>
</comment>
<comment type="similarity">
    <text evidence="1">Belongs to the glycosyltransferase 4 family. MraY subfamily.</text>
</comment>
<sequence>MLIWLVELSEYFKFLNLFRYITFRTGAALFTSALIVFLFGPTIINSLRIRQGKGQPIRADGPQTHFKKAGTPTMGGLMILAGIVGASLLWADLSNVYVVATLLVTLGFGAIGFYDDYLKVTKQSHKGFSGKARLGIEFIIAGIAVYFMMRTALASGTAGSTFGSSIAFPFFKDFLINLGIMFVVFGGFVIVGAGNAVNLTDGLDGLAIVPVMIAAASFGVIAYLAGNVVFANYLQINFVPGTGELAVVLGAVIGAGLGFLWFNAPPAAIFMGDTGSLALGGTIGTVAVATKHEIVMAIIGGLFVMETLSVIIQVGFFKMTGRRVFLMAPIHHHFEKKGWTESQVVIRFWIIAVGLALLGLSTLKLR</sequence>
<accession>B3PTW3</accession>
<name>MRAY_RHIE6</name>
<gene>
    <name evidence="1" type="primary">mraY</name>
    <name type="ordered locus">RHECIAT_CH0003001</name>
</gene>
<dbReference type="EC" id="2.7.8.13" evidence="1"/>
<dbReference type="EMBL" id="CP001074">
    <property type="protein sequence ID" value="ACE91950.1"/>
    <property type="molecule type" value="Genomic_DNA"/>
</dbReference>
<dbReference type="SMR" id="B3PTW3"/>
<dbReference type="KEGG" id="rec:RHECIAT_CH0003001"/>
<dbReference type="eggNOG" id="COG0472">
    <property type="taxonomic scope" value="Bacteria"/>
</dbReference>
<dbReference type="HOGENOM" id="CLU_023982_0_0_5"/>
<dbReference type="UniPathway" id="UPA00219"/>
<dbReference type="Proteomes" id="UP000008817">
    <property type="component" value="Chromosome"/>
</dbReference>
<dbReference type="GO" id="GO:0005886">
    <property type="term" value="C:plasma membrane"/>
    <property type="evidence" value="ECO:0007669"/>
    <property type="project" value="UniProtKB-SubCell"/>
</dbReference>
<dbReference type="GO" id="GO:0046872">
    <property type="term" value="F:metal ion binding"/>
    <property type="evidence" value="ECO:0007669"/>
    <property type="project" value="UniProtKB-KW"/>
</dbReference>
<dbReference type="GO" id="GO:0008963">
    <property type="term" value="F:phospho-N-acetylmuramoyl-pentapeptide-transferase activity"/>
    <property type="evidence" value="ECO:0007669"/>
    <property type="project" value="UniProtKB-UniRule"/>
</dbReference>
<dbReference type="GO" id="GO:0051992">
    <property type="term" value="F:UDP-N-acetylmuramoyl-L-alanyl-D-glutamyl-meso-2,6-diaminopimelyl-D-alanyl-D-alanine:undecaprenyl-phosphate transferase activity"/>
    <property type="evidence" value="ECO:0007669"/>
    <property type="project" value="RHEA"/>
</dbReference>
<dbReference type="GO" id="GO:0051301">
    <property type="term" value="P:cell division"/>
    <property type="evidence" value="ECO:0007669"/>
    <property type="project" value="UniProtKB-KW"/>
</dbReference>
<dbReference type="GO" id="GO:0071555">
    <property type="term" value="P:cell wall organization"/>
    <property type="evidence" value="ECO:0007669"/>
    <property type="project" value="UniProtKB-KW"/>
</dbReference>
<dbReference type="GO" id="GO:0009252">
    <property type="term" value="P:peptidoglycan biosynthetic process"/>
    <property type="evidence" value="ECO:0007669"/>
    <property type="project" value="UniProtKB-UniRule"/>
</dbReference>
<dbReference type="GO" id="GO:0008360">
    <property type="term" value="P:regulation of cell shape"/>
    <property type="evidence" value="ECO:0007669"/>
    <property type="project" value="UniProtKB-KW"/>
</dbReference>
<dbReference type="CDD" id="cd06852">
    <property type="entry name" value="GT_MraY"/>
    <property type="match status" value="1"/>
</dbReference>
<dbReference type="HAMAP" id="MF_00038">
    <property type="entry name" value="MraY"/>
    <property type="match status" value="1"/>
</dbReference>
<dbReference type="InterPro" id="IPR000715">
    <property type="entry name" value="Glycosyl_transferase_4"/>
</dbReference>
<dbReference type="InterPro" id="IPR003524">
    <property type="entry name" value="PNAcMuramoyl-5peptid_Trfase"/>
</dbReference>
<dbReference type="InterPro" id="IPR018480">
    <property type="entry name" value="PNAcMuramoyl-5peptid_Trfase_CS"/>
</dbReference>
<dbReference type="NCBIfam" id="TIGR00445">
    <property type="entry name" value="mraY"/>
    <property type="match status" value="1"/>
</dbReference>
<dbReference type="PANTHER" id="PTHR22926">
    <property type="entry name" value="PHOSPHO-N-ACETYLMURAMOYL-PENTAPEPTIDE-TRANSFERASE"/>
    <property type="match status" value="1"/>
</dbReference>
<dbReference type="PANTHER" id="PTHR22926:SF5">
    <property type="entry name" value="PHOSPHO-N-ACETYLMURAMOYL-PENTAPEPTIDE-TRANSFERASE HOMOLOG"/>
    <property type="match status" value="1"/>
</dbReference>
<dbReference type="Pfam" id="PF00953">
    <property type="entry name" value="Glycos_transf_4"/>
    <property type="match status" value="1"/>
</dbReference>
<dbReference type="Pfam" id="PF10555">
    <property type="entry name" value="MraY_sig1"/>
    <property type="match status" value="1"/>
</dbReference>
<dbReference type="PROSITE" id="PS01347">
    <property type="entry name" value="MRAY_1"/>
    <property type="match status" value="1"/>
</dbReference>
<dbReference type="PROSITE" id="PS01348">
    <property type="entry name" value="MRAY_2"/>
    <property type="match status" value="1"/>
</dbReference>
<reference key="1">
    <citation type="journal article" date="2010" name="Appl. Environ. Microbiol.">
        <title>Conserved symbiotic plasmid DNA sequences in the multireplicon pangenomic structure of Rhizobium etli.</title>
        <authorList>
            <person name="Gonzalez V."/>
            <person name="Acosta J.L."/>
            <person name="Santamaria R.I."/>
            <person name="Bustos P."/>
            <person name="Fernandez J.L."/>
            <person name="Hernandez Gonzalez I.L."/>
            <person name="Diaz R."/>
            <person name="Flores M."/>
            <person name="Palacios R."/>
            <person name="Mora J."/>
            <person name="Davila G."/>
        </authorList>
    </citation>
    <scope>NUCLEOTIDE SEQUENCE [LARGE SCALE GENOMIC DNA]</scope>
    <source>
        <strain>CIAT 652</strain>
    </source>
</reference>